<reference key="1">
    <citation type="journal article" date="2005" name="Nature">
        <title>Genome sequencing and analysis of Aspergillus oryzae.</title>
        <authorList>
            <person name="Machida M."/>
            <person name="Asai K."/>
            <person name="Sano M."/>
            <person name="Tanaka T."/>
            <person name="Kumagai T."/>
            <person name="Terai G."/>
            <person name="Kusumoto K."/>
            <person name="Arima T."/>
            <person name="Akita O."/>
            <person name="Kashiwagi Y."/>
            <person name="Abe K."/>
            <person name="Gomi K."/>
            <person name="Horiuchi H."/>
            <person name="Kitamoto K."/>
            <person name="Kobayashi T."/>
            <person name="Takeuchi M."/>
            <person name="Denning D.W."/>
            <person name="Galagan J.E."/>
            <person name="Nierman W.C."/>
            <person name="Yu J."/>
            <person name="Archer D.B."/>
            <person name="Bennett J.W."/>
            <person name="Bhatnagar D."/>
            <person name="Cleveland T.E."/>
            <person name="Fedorova N.D."/>
            <person name="Gotoh O."/>
            <person name="Horikawa H."/>
            <person name="Hosoyama A."/>
            <person name="Ichinomiya M."/>
            <person name="Igarashi R."/>
            <person name="Iwashita K."/>
            <person name="Juvvadi P.R."/>
            <person name="Kato M."/>
            <person name="Kato Y."/>
            <person name="Kin T."/>
            <person name="Kokubun A."/>
            <person name="Maeda H."/>
            <person name="Maeyama N."/>
            <person name="Maruyama J."/>
            <person name="Nagasaki H."/>
            <person name="Nakajima T."/>
            <person name="Oda K."/>
            <person name="Okada K."/>
            <person name="Paulsen I."/>
            <person name="Sakamoto K."/>
            <person name="Sawano T."/>
            <person name="Takahashi M."/>
            <person name="Takase K."/>
            <person name="Terabayashi Y."/>
            <person name="Wortman J.R."/>
            <person name="Yamada O."/>
            <person name="Yamagata Y."/>
            <person name="Anazawa H."/>
            <person name="Hata Y."/>
            <person name="Koide Y."/>
            <person name="Komori T."/>
            <person name="Koyama Y."/>
            <person name="Minetoki T."/>
            <person name="Suharnan S."/>
            <person name="Tanaka A."/>
            <person name="Isono K."/>
            <person name="Kuhara S."/>
            <person name="Ogasawara N."/>
            <person name="Kikuchi H."/>
        </authorList>
    </citation>
    <scope>NUCLEOTIDE SEQUENCE [LARGE SCALE GENOMIC DNA]</scope>
    <source>
        <strain>ATCC 42149 / RIB 40</strain>
    </source>
</reference>
<dbReference type="EC" id="4.2.2.2"/>
<dbReference type="EMBL" id="BA000052">
    <property type="protein sequence ID" value="BAE61182.1"/>
    <property type="molecule type" value="Genomic_DNA"/>
</dbReference>
<dbReference type="RefSeq" id="XP_001822315.1">
    <property type="nucleotide sequence ID" value="XM_001822263.1"/>
</dbReference>
<dbReference type="SMR" id="Q2UB83"/>
<dbReference type="STRING" id="510516.Q2UB83"/>
<dbReference type="CAZy" id="PL1">
    <property type="family name" value="Polysaccharide Lyase Family 1"/>
</dbReference>
<dbReference type="GlyCosmos" id="Q2UB83">
    <property type="glycosylation" value="4 sites, No reported glycans"/>
</dbReference>
<dbReference type="EnsemblFungi" id="BAE61182">
    <property type="protein sequence ID" value="BAE61182"/>
    <property type="gene ID" value="AO090102000072"/>
</dbReference>
<dbReference type="GeneID" id="5994360"/>
<dbReference type="KEGG" id="aor:AO090102000072"/>
<dbReference type="VEuPathDB" id="FungiDB:AO090102000072"/>
<dbReference type="HOGENOM" id="CLU_016764_1_1_1"/>
<dbReference type="OMA" id="GIHSMGT"/>
<dbReference type="OrthoDB" id="121282at5052"/>
<dbReference type="Proteomes" id="UP000006564">
    <property type="component" value="Chromosome 4"/>
</dbReference>
<dbReference type="GO" id="GO:0005576">
    <property type="term" value="C:extracellular region"/>
    <property type="evidence" value="ECO:0007669"/>
    <property type="project" value="UniProtKB-SubCell"/>
</dbReference>
<dbReference type="GO" id="GO:0046872">
    <property type="term" value="F:metal ion binding"/>
    <property type="evidence" value="ECO:0007669"/>
    <property type="project" value="UniProtKB-KW"/>
</dbReference>
<dbReference type="GO" id="GO:0030570">
    <property type="term" value="F:pectate lyase activity"/>
    <property type="evidence" value="ECO:0007669"/>
    <property type="project" value="UniProtKB-EC"/>
</dbReference>
<dbReference type="GO" id="GO:0071555">
    <property type="term" value="P:cell wall organization"/>
    <property type="evidence" value="ECO:0007669"/>
    <property type="project" value="UniProtKB-KW"/>
</dbReference>
<dbReference type="GO" id="GO:0000272">
    <property type="term" value="P:polysaccharide catabolic process"/>
    <property type="evidence" value="ECO:0007669"/>
    <property type="project" value="UniProtKB-KW"/>
</dbReference>
<dbReference type="Gene3D" id="2.160.20.10">
    <property type="entry name" value="Single-stranded right-handed beta-helix, Pectin lyase-like"/>
    <property type="match status" value="1"/>
</dbReference>
<dbReference type="InterPro" id="IPR018247">
    <property type="entry name" value="EF_Hand_1_Ca_BS"/>
</dbReference>
<dbReference type="InterPro" id="IPR012334">
    <property type="entry name" value="Pectin_lyas_fold"/>
</dbReference>
<dbReference type="InterPro" id="IPR011050">
    <property type="entry name" value="Pectin_lyase_fold/virulence"/>
</dbReference>
<dbReference type="InterPro" id="IPR052063">
    <property type="entry name" value="Polysaccharide_Lyase_1"/>
</dbReference>
<dbReference type="PANTHER" id="PTHR42970">
    <property type="entry name" value="PECTATE LYASE C-RELATED"/>
    <property type="match status" value="1"/>
</dbReference>
<dbReference type="PANTHER" id="PTHR42970:SF1">
    <property type="entry name" value="PECTATE LYASE C-RELATED"/>
    <property type="match status" value="1"/>
</dbReference>
<dbReference type="Pfam" id="PF18884">
    <property type="entry name" value="TSP3_bac"/>
    <property type="match status" value="1"/>
</dbReference>
<dbReference type="SUPFAM" id="SSF51126">
    <property type="entry name" value="Pectin lyase-like"/>
    <property type="match status" value="1"/>
</dbReference>
<dbReference type="PROSITE" id="PS00018">
    <property type="entry name" value="EF_HAND_1"/>
    <property type="match status" value="1"/>
</dbReference>
<organism>
    <name type="scientific">Aspergillus oryzae (strain ATCC 42149 / RIB 40)</name>
    <name type="common">Yellow koji mold</name>
    <dbReference type="NCBI Taxonomy" id="510516"/>
    <lineage>
        <taxon>Eukaryota</taxon>
        <taxon>Fungi</taxon>
        <taxon>Dikarya</taxon>
        <taxon>Ascomycota</taxon>
        <taxon>Pezizomycotina</taxon>
        <taxon>Eurotiomycetes</taxon>
        <taxon>Eurotiomycetidae</taxon>
        <taxon>Eurotiales</taxon>
        <taxon>Aspergillaceae</taxon>
        <taxon>Aspergillus</taxon>
        <taxon>Aspergillus subgen. Circumdati</taxon>
    </lineage>
</organism>
<feature type="signal peptide" evidence="2">
    <location>
        <begin position="1"/>
        <end position="19"/>
    </location>
</feature>
<feature type="chain" id="PRO_0000394571" description="Probable pectate lyase C">
    <location>
        <begin position="20"/>
        <end position="419"/>
    </location>
</feature>
<feature type="domain" description="EF-hand">
    <location>
        <begin position="261"/>
        <end position="296"/>
    </location>
</feature>
<feature type="region of interest" description="Disordered" evidence="4">
    <location>
        <begin position="352"/>
        <end position="395"/>
    </location>
</feature>
<feature type="compositionally biased region" description="Low complexity" evidence="4">
    <location>
        <begin position="363"/>
        <end position="372"/>
    </location>
</feature>
<feature type="compositionally biased region" description="Acidic residues" evidence="4">
    <location>
        <begin position="373"/>
        <end position="386"/>
    </location>
</feature>
<feature type="active site" evidence="2">
    <location>
        <position position="204"/>
    </location>
</feature>
<feature type="binding site" evidence="3">
    <location>
        <position position="274"/>
    </location>
    <ligand>
        <name>Ca(2+)</name>
        <dbReference type="ChEBI" id="CHEBI:29108"/>
    </ligand>
</feature>
<feature type="binding site" evidence="3">
    <location>
        <position position="276"/>
    </location>
    <ligand>
        <name>Ca(2+)</name>
        <dbReference type="ChEBI" id="CHEBI:29108"/>
    </ligand>
</feature>
<feature type="binding site" evidence="3">
    <location>
        <position position="278"/>
    </location>
    <ligand>
        <name>Ca(2+)</name>
        <dbReference type="ChEBI" id="CHEBI:29108"/>
    </ligand>
</feature>
<feature type="binding site" evidence="3">
    <location>
        <position position="280"/>
    </location>
    <ligand>
        <name>Ca(2+)</name>
        <dbReference type="ChEBI" id="CHEBI:29108"/>
    </ligand>
</feature>
<feature type="binding site" evidence="3">
    <location>
        <position position="285"/>
    </location>
    <ligand>
        <name>Ca(2+)</name>
        <dbReference type="ChEBI" id="CHEBI:29108"/>
    </ligand>
</feature>
<feature type="glycosylation site" description="N-linked (GlcNAc...) asparagine" evidence="2">
    <location>
        <position position="48"/>
    </location>
</feature>
<feature type="glycosylation site" description="N-linked (GlcNAc...) asparagine" evidence="2">
    <location>
        <position position="164"/>
    </location>
</feature>
<feature type="glycosylation site" description="N-linked (GlcNAc...) asparagine" evidence="2">
    <location>
        <position position="201"/>
    </location>
</feature>
<feature type="glycosylation site" description="N-linked (GlcNAc...) asparagine" evidence="2">
    <location>
        <position position="282"/>
    </location>
</feature>
<sequence length="419" mass="44010">MRLTPSLISCLSLLHFTSALVAFPGAEGFGANAVGGRQGVVYVVSNLNDSGEGSLRDAVSQPGRIVVFSVGGVIEITDRIVVSKQVTILGQTAPGDGITVYGNGWSFSNADDAIVRYIRIRMGKGGSSGKDAMGIADGKNMIFDHVSVSWGRDETFSINGDVSNVTIQNSIIAQGLETHSCGGLMQTDGGVSLFRNLYIDNKTRNPKVKGVNEFTNNVIYNWGGGGGYIAGGSDGESNVNVIGNYFISGLDTSVTAFTRGNENFHAYVETNYYDSDKDGTLNGSELGVDSTNYGGMDLVTEKYDYPAVASVLSPDDALTYVTKYAGASKVRDSVDTQLVAQVESYGKDGALISDEADMGGAGDLDQGTTPTDTDGDGIPDDAEAELGTDPNTADSMDLDTSGYTFLEVWANSLVPSSYA</sequence>
<proteinExistence type="inferred from homology"/>
<accession>Q2UB83</accession>
<name>PLYC_ASPOR</name>
<comment type="function">
    <text evidence="1">Pectinolytic enzyme consist of four classes of enzymes: pectin lyase, polygalacturonase, pectin methylesterase and rhamnogalacturonase. Among pectinolytic enzymes, pectin lyase is the most important in depolymerization of pectin, since it cleaves internal glycosidic bonds of highly methylated pectins. Favors pectate, the anion, over pectin, the methyl ester (By similarity).</text>
</comment>
<comment type="catalytic activity">
    <reaction>
        <text>Eliminative cleavage of (1-&gt;4)-alpha-D-galacturonan to give oligosaccharides with 4-deoxy-alpha-D-galact-4-enuronosyl groups at their non-reducing ends.</text>
        <dbReference type="EC" id="4.2.2.2"/>
    </reaction>
</comment>
<comment type="cofactor">
    <cofactor evidence="1">
        <name>Ca(2+)</name>
        <dbReference type="ChEBI" id="CHEBI:29108"/>
    </cofactor>
    <text evidence="1">Binds 1 Ca(2+) ion per subunit.</text>
</comment>
<comment type="subcellular location">
    <subcellularLocation>
        <location evidence="1">Secreted</location>
    </subcellularLocation>
</comment>
<comment type="similarity">
    <text evidence="5">Belongs to the polysaccharide lyase 1 family.</text>
</comment>
<protein>
    <recommendedName>
        <fullName>Probable pectate lyase C</fullName>
        <ecNumber>4.2.2.2</ecNumber>
    </recommendedName>
</protein>
<keyword id="KW-0106">Calcium</keyword>
<keyword id="KW-0119">Carbohydrate metabolism</keyword>
<keyword id="KW-0961">Cell wall biogenesis/degradation</keyword>
<keyword id="KW-0325">Glycoprotein</keyword>
<keyword id="KW-0456">Lyase</keyword>
<keyword id="KW-0479">Metal-binding</keyword>
<keyword id="KW-0624">Polysaccharide degradation</keyword>
<keyword id="KW-1185">Reference proteome</keyword>
<keyword id="KW-0964">Secreted</keyword>
<keyword id="KW-0732">Signal</keyword>
<gene>
    <name type="primary">plyC</name>
    <name type="ORF">AO090102000072</name>
</gene>
<evidence type="ECO:0000250" key="1"/>
<evidence type="ECO:0000255" key="2"/>
<evidence type="ECO:0000255" key="3">
    <source>
        <dbReference type="PROSITE-ProRule" id="PRU10142"/>
    </source>
</evidence>
<evidence type="ECO:0000256" key="4">
    <source>
        <dbReference type="SAM" id="MobiDB-lite"/>
    </source>
</evidence>
<evidence type="ECO:0000305" key="5"/>